<comment type="function">
    <text evidence="2">Component of the BRCA1-A complex, a complex that specifically recognizes 'Lys-63'-linked ubiquitinated histones H2A and H2AX at DNA lesions sites, leading to target the BRCA1-BARD1 heterodimer to sites of DNA damage at double-strand breaks (DSBs). The BRCA1-A complex also possesses deubiquitinase activity that specifically removes 'Lys-63'-linked ubiquitin on histones H2A and H2AX. In the BRCA1-A complex, it is required for the complex integrity and its localization at DSBs. Component of the BRISC complex, a multiprotein complex that specifically cleaves 'Lys-63'-linked ubiquitin in various substrates. In these 2 complexes, it is probably required to maintain the stability of BABAM2 and help the 'Lys-63'-linked deubiquitinase activity mediated by BRCC3/BRCC36 component. The BRISC complex is required for normal mitotic spindle assembly and microtubule attachment to kinetochores via its role in deubiquitinating NUMA1. Plays a role in interferon signaling via its role in the deubiquitination of the interferon receptor IFNAR1; deubiquitination increases IFNAR1 activity by enhancing its stability and cell surface expression. Down-regulates the response to bacterial lipopolysaccharide (LPS) via its role in IFNAR1 deubiquitination.</text>
</comment>
<comment type="subunit">
    <text evidence="2">Component of the ARISC complex, at least composed of UIMC1/RAP80, ABRAXAS1, BRCC3/BRCC36, BABAM2 and BABAM1/NBA1. Component of the BRCA1-A complex, at least composed of BRCA1, BARD1, UIMC1/RAP80, ABRAXAS1, BRCC3/BRCC36, BABAM2 and BABAM1/NBA1. In the BRCA1-A complex, interacts directly with ABRAXAS1 and BABAM2. Component of the BRISC complex, at least composed of ABRAXAS2, BRCC3/BRCC36, BABAM2 and BABAM1/NBA1. Identified in a complex with SHMT2 and the other subunits of the BRISC complex.</text>
</comment>
<comment type="subcellular location">
    <subcellularLocation>
        <location evidence="2">Cytoplasm</location>
    </subcellularLocation>
    <subcellularLocation>
        <location evidence="2">Nucleus</location>
    </subcellularLocation>
    <text evidence="2">Localizes at sites of DNA damage at double-strand breaks (DSBs).</text>
</comment>
<comment type="domain">
    <text evidence="2">The VWFA-like region is similar to the VWFA domain. Its presence reveals similarities between the structure of the 19S proteasome and the BRCA1-A complexes.</text>
</comment>
<comment type="similarity">
    <text evidence="4">Belongs to the BABAM1 family.</text>
</comment>
<organism>
    <name type="scientific">Pongo abelii</name>
    <name type="common">Sumatran orangutan</name>
    <name type="synonym">Pongo pygmaeus abelii</name>
    <dbReference type="NCBI Taxonomy" id="9601"/>
    <lineage>
        <taxon>Eukaryota</taxon>
        <taxon>Metazoa</taxon>
        <taxon>Chordata</taxon>
        <taxon>Craniata</taxon>
        <taxon>Vertebrata</taxon>
        <taxon>Euteleostomi</taxon>
        <taxon>Mammalia</taxon>
        <taxon>Eutheria</taxon>
        <taxon>Euarchontoglires</taxon>
        <taxon>Primates</taxon>
        <taxon>Haplorrhini</taxon>
        <taxon>Catarrhini</taxon>
        <taxon>Hominidae</taxon>
        <taxon>Pongo</taxon>
    </lineage>
</organism>
<proteinExistence type="evidence at transcript level"/>
<feature type="chain" id="PRO_0000288460" description="BRISC and BRCA1-A complex member 1">
    <location>
        <begin position="1"/>
        <end position="329"/>
    </location>
</feature>
<feature type="region of interest" description="Disordered" evidence="3">
    <location>
        <begin position="1"/>
        <end position="84"/>
    </location>
</feature>
<feature type="region of interest" description="VWFA-like">
    <location>
        <begin position="95"/>
        <end position="298"/>
    </location>
</feature>
<feature type="compositionally biased region" description="Acidic residues" evidence="3">
    <location>
        <begin position="10"/>
        <end position="19"/>
    </location>
</feature>
<feature type="modified residue" description="N-acetylmethionine" evidence="2">
    <location>
        <position position="1"/>
    </location>
</feature>
<feature type="modified residue" description="Phosphoserine" evidence="1">
    <location>
        <position position="8"/>
    </location>
</feature>
<feature type="modified residue" description="Phosphoserine" evidence="2">
    <location>
        <position position="29"/>
    </location>
</feature>
<feature type="modified residue" description="Phosphoserine" evidence="2">
    <location>
        <position position="49"/>
    </location>
</feature>
<feature type="modified residue" description="Phosphoserine" evidence="2">
    <location>
        <position position="57"/>
    </location>
</feature>
<feature type="modified residue" description="Phosphoserine" evidence="2">
    <location>
        <position position="62"/>
    </location>
</feature>
<feature type="modified residue" description="Phosphothreonine" evidence="2">
    <location>
        <position position="65"/>
    </location>
</feature>
<feature type="modified residue" description="Phosphoserine" evidence="2">
    <location>
        <position position="66"/>
    </location>
</feature>
<evidence type="ECO:0000250" key="1">
    <source>
        <dbReference type="UniProtKB" id="Q5XIJ6"/>
    </source>
</evidence>
<evidence type="ECO:0000250" key="2">
    <source>
        <dbReference type="UniProtKB" id="Q9NWV8"/>
    </source>
</evidence>
<evidence type="ECO:0000256" key="3">
    <source>
        <dbReference type="SAM" id="MobiDB-lite"/>
    </source>
</evidence>
<evidence type="ECO:0000305" key="4"/>
<keyword id="KW-0007">Acetylation</keyword>
<keyword id="KW-0131">Cell cycle</keyword>
<keyword id="KW-0132">Cell division</keyword>
<keyword id="KW-0156">Chromatin regulator</keyword>
<keyword id="KW-0963">Cytoplasm</keyword>
<keyword id="KW-0227">DNA damage</keyword>
<keyword id="KW-0234">DNA repair</keyword>
<keyword id="KW-0498">Mitosis</keyword>
<keyword id="KW-0539">Nucleus</keyword>
<keyword id="KW-0597">Phosphoprotein</keyword>
<keyword id="KW-1185">Reference proteome</keyword>
<keyword id="KW-0833">Ubl conjugation pathway</keyword>
<reference key="1">
    <citation type="submission" date="2004-11" db="EMBL/GenBank/DDBJ databases">
        <authorList>
            <consortium name="The German cDNA consortium"/>
        </authorList>
    </citation>
    <scope>NUCLEOTIDE SEQUENCE [LARGE SCALE MRNA]</scope>
    <source>
        <tissue>Heart</tissue>
    </source>
</reference>
<gene>
    <name type="primary">BABAM1</name>
    <name type="synonym">MERIT40</name>
    <name type="synonym">NBA1</name>
</gene>
<dbReference type="EMBL" id="CR860103">
    <property type="protein sequence ID" value="CAH92248.1"/>
    <property type="molecule type" value="mRNA"/>
</dbReference>
<dbReference type="RefSeq" id="NP_001126315.1">
    <property type="nucleotide sequence ID" value="NM_001132843.1"/>
</dbReference>
<dbReference type="RefSeq" id="XP_024092107.1">
    <property type="nucleotide sequence ID" value="XM_024236339.3"/>
</dbReference>
<dbReference type="RefSeq" id="XP_054394404.1">
    <property type="nucleotide sequence ID" value="XM_054538429.2"/>
</dbReference>
<dbReference type="SMR" id="Q5R7L2"/>
<dbReference type="FunCoup" id="Q5R7L2">
    <property type="interactions" value="4045"/>
</dbReference>
<dbReference type="STRING" id="9601.ENSPPYP00000010875"/>
<dbReference type="Ensembl" id="ENSPPYT00000011299.3">
    <property type="protein sequence ID" value="ENSPPYP00000010875.3"/>
    <property type="gene ID" value="ENSPPYG00000009705.3"/>
</dbReference>
<dbReference type="GeneID" id="100173294"/>
<dbReference type="KEGG" id="pon:100173294"/>
<dbReference type="CTD" id="29086"/>
<dbReference type="eggNOG" id="ENOG502QPZP">
    <property type="taxonomic scope" value="Eukaryota"/>
</dbReference>
<dbReference type="GeneTree" id="ENSGT00390000016934"/>
<dbReference type="InParanoid" id="Q5R7L2"/>
<dbReference type="OMA" id="SCTTAWP"/>
<dbReference type="OrthoDB" id="547311at2759"/>
<dbReference type="Proteomes" id="UP000001595">
    <property type="component" value="Chromosome 19"/>
</dbReference>
<dbReference type="GO" id="GO:0070531">
    <property type="term" value="C:BRCA1-A complex"/>
    <property type="evidence" value="ECO:0000250"/>
    <property type="project" value="UniProtKB"/>
</dbReference>
<dbReference type="GO" id="GO:0070552">
    <property type="term" value="C:BRISC complex"/>
    <property type="evidence" value="ECO:0000250"/>
    <property type="project" value="UniProtKB"/>
</dbReference>
<dbReference type="GO" id="GO:0005737">
    <property type="term" value="C:cytoplasm"/>
    <property type="evidence" value="ECO:0000250"/>
    <property type="project" value="UniProtKB"/>
</dbReference>
<dbReference type="GO" id="GO:0005829">
    <property type="term" value="C:cytosol"/>
    <property type="evidence" value="ECO:0007669"/>
    <property type="project" value="Ensembl"/>
</dbReference>
<dbReference type="GO" id="GO:0016604">
    <property type="term" value="C:nuclear body"/>
    <property type="evidence" value="ECO:0007669"/>
    <property type="project" value="Ensembl"/>
</dbReference>
<dbReference type="GO" id="GO:0005634">
    <property type="term" value="C:nucleus"/>
    <property type="evidence" value="ECO:0000250"/>
    <property type="project" value="UniProtKB"/>
</dbReference>
<dbReference type="GO" id="GO:0042802">
    <property type="term" value="F:identical protein binding"/>
    <property type="evidence" value="ECO:0007669"/>
    <property type="project" value="Ensembl"/>
</dbReference>
<dbReference type="GO" id="GO:0051301">
    <property type="term" value="P:cell division"/>
    <property type="evidence" value="ECO:0007669"/>
    <property type="project" value="UniProtKB-KW"/>
</dbReference>
<dbReference type="GO" id="GO:0140861">
    <property type="term" value="P:DNA repair-dependent chromatin remodeling"/>
    <property type="evidence" value="ECO:0000250"/>
    <property type="project" value="UniProtKB"/>
</dbReference>
<dbReference type="GO" id="GO:0006302">
    <property type="term" value="P:double-strand break repair"/>
    <property type="evidence" value="ECO:0000250"/>
    <property type="project" value="UniProtKB"/>
</dbReference>
<dbReference type="GO" id="GO:0071425">
    <property type="term" value="P:hematopoietic stem cell proliferation"/>
    <property type="evidence" value="ECO:0007669"/>
    <property type="project" value="Ensembl"/>
</dbReference>
<dbReference type="GO" id="GO:0007095">
    <property type="term" value="P:mitotic G2 DNA damage checkpoint signaling"/>
    <property type="evidence" value="ECO:0000250"/>
    <property type="project" value="UniProtKB"/>
</dbReference>
<dbReference type="GO" id="GO:0045739">
    <property type="term" value="P:positive regulation of DNA repair"/>
    <property type="evidence" value="ECO:0000250"/>
    <property type="project" value="UniProtKB"/>
</dbReference>
<dbReference type="GO" id="GO:0010212">
    <property type="term" value="P:response to ionizing radiation"/>
    <property type="evidence" value="ECO:0000250"/>
    <property type="project" value="UniProtKB"/>
</dbReference>
<dbReference type="CDD" id="cd21502">
    <property type="entry name" value="vWA_BABAM1"/>
    <property type="match status" value="1"/>
</dbReference>
<dbReference type="Gene3D" id="3.40.50.410">
    <property type="entry name" value="von Willebrand factor, type A domain"/>
    <property type="match status" value="1"/>
</dbReference>
<dbReference type="InterPro" id="IPR026126">
    <property type="entry name" value="BABAM1"/>
</dbReference>
<dbReference type="InterPro" id="IPR036465">
    <property type="entry name" value="vWFA_dom_sf"/>
</dbReference>
<dbReference type="PANTHER" id="PTHR15660">
    <property type="entry name" value="BRISC AND BRCA1-A COMPLEX MEMBER 1"/>
    <property type="match status" value="1"/>
</dbReference>
<dbReference type="PANTHER" id="PTHR15660:SF1">
    <property type="entry name" value="BRISC AND BRCA1-A COMPLEX MEMBER 1"/>
    <property type="match status" value="1"/>
</dbReference>
<dbReference type="SUPFAM" id="SSF53300">
    <property type="entry name" value="vWA-like"/>
    <property type="match status" value="1"/>
</dbReference>
<accession>Q5R7L2</accession>
<name>BABA1_PONAB</name>
<protein>
    <recommendedName>
        <fullName>BRISC and BRCA1-A complex member 1</fullName>
    </recommendedName>
    <alternativeName>
        <fullName>Mediator of RAP80 interactions and targeting subunit of 40 kDa</fullName>
    </alternativeName>
    <alternativeName>
        <fullName>New component of the BRCA1-A complex</fullName>
    </alternativeName>
</protein>
<sequence length="329" mass="36558">MEVPEPSSPTEEEEEEEEHSAEPRPRTRSNPEGAEDRAVGAQASVGSRSEGEGEAASADDGSPNTSGAGPKSWQVPPPAPEVQIRTPRVNCPEKVIICLDLSEEMSLPKLESFNGSKTNALNVSQKMIEMFVRTKHKIDKSHEFALVVVNDDTAWLSGLTSDPRELCSCLYDLETASCSTFNLEGLFSLIQQKTELPVTENVQTIPPPYVVRTILVYSRPPCQPQFSLTEPMKKMFQCPYFFFDVVYIHNGTEEKEEEMSWKDMFAFMGSLDTKGTSYKYEVALAGPALELHNCMAKLLAHPLQRPCQSHASYSLLEEEDEATEVEATV</sequence>